<accession>Q7MA59</accession>
<dbReference type="EMBL" id="BX571658">
    <property type="protein sequence ID" value="CAE09604.1"/>
    <property type="molecule type" value="Genomic_DNA"/>
</dbReference>
<dbReference type="RefSeq" id="WP_011138404.1">
    <property type="nucleotide sequence ID" value="NC_005090.1"/>
</dbReference>
<dbReference type="SMR" id="Q7MA59"/>
<dbReference type="STRING" id="273121.WS0464"/>
<dbReference type="KEGG" id="wsu:WS0464"/>
<dbReference type="eggNOG" id="COG0081">
    <property type="taxonomic scope" value="Bacteria"/>
</dbReference>
<dbReference type="HOGENOM" id="CLU_062853_0_0_7"/>
<dbReference type="Proteomes" id="UP000000422">
    <property type="component" value="Chromosome"/>
</dbReference>
<dbReference type="GO" id="GO:0022625">
    <property type="term" value="C:cytosolic large ribosomal subunit"/>
    <property type="evidence" value="ECO:0007669"/>
    <property type="project" value="TreeGrafter"/>
</dbReference>
<dbReference type="GO" id="GO:0019843">
    <property type="term" value="F:rRNA binding"/>
    <property type="evidence" value="ECO:0007669"/>
    <property type="project" value="UniProtKB-UniRule"/>
</dbReference>
<dbReference type="GO" id="GO:0003735">
    <property type="term" value="F:structural constituent of ribosome"/>
    <property type="evidence" value="ECO:0007669"/>
    <property type="project" value="InterPro"/>
</dbReference>
<dbReference type="GO" id="GO:0000049">
    <property type="term" value="F:tRNA binding"/>
    <property type="evidence" value="ECO:0007669"/>
    <property type="project" value="UniProtKB-KW"/>
</dbReference>
<dbReference type="GO" id="GO:0006417">
    <property type="term" value="P:regulation of translation"/>
    <property type="evidence" value="ECO:0007669"/>
    <property type="project" value="UniProtKB-KW"/>
</dbReference>
<dbReference type="GO" id="GO:0006412">
    <property type="term" value="P:translation"/>
    <property type="evidence" value="ECO:0007669"/>
    <property type="project" value="UniProtKB-UniRule"/>
</dbReference>
<dbReference type="CDD" id="cd00403">
    <property type="entry name" value="Ribosomal_L1"/>
    <property type="match status" value="1"/>
</dbReference>
<dbReference type="FunFam" id="3.40.50.790:FF:000001">
    <property type="entry name" value="50S ribosomal protein L1"/>
    <property type="match status" value="1"/>
</dbReference>
<dbReference type="Gene3D" id="3.30.190.20">
    <property type="match status" value="1"/>
</dbReference>
<dbReference type="Gene3D" id="3.40.50.790">
    <property type="match status" value="1"/>
</dbReference>
<dbReference type="HAMAP" id="MF_01318_B">
    <property type="entry name" value="Ribosomal_uL1_B"/>
    <property type="match status" value="1"/>
</dbReference>
<dbReference type="InterPro" id="IPR005878">
    <property type="entry name" value="Ribosom_uL1_bac-type"/>
</dbReference>
<dbReference type="InterPro" id="IPR002143">
    <property type="entry name" value="Ribosomal_uL1"/>
</dbReference>
<dbReference type="InterPro" id="IPR023674">
    <property type="entry name" value="Ribosomal_uL1-like"/>
</dbReference>
<dbReference type="InterPro" id="IPR028364">
    <property type="entry name" value="Ribosomal_uL1/biogenesis"/>
</dbReference>
<dbReference type="InterPro" id="IPR016095">
    <property type="entry name" value="Ribosomal_uL1_3-a/b-sand"/>
</dbReference>
<dbReference type="InterPro" id="IPR023673">
    <property type="entry name" value="Ribosomal_uL1_CS"/>
</dbReference>
<dbReference type="NCBIfam" id="TIGR01169">
    <property type="entry name" value="rplA_bact"/>
    <property type="match status" value="1"/>
</dbReference>
<dbReference type="PANTHER" id="PTHR36427">
    <property type="entry name" value="54S RIBOSOMAL PROTEIN L1, MITOCHONDRIAL"/>
    <property type="match status" value="1"/>
</dbReference>
<dbReference type="PANTHER" id="PTHR36427:SF3">
    <property type="entry name" value="LARGE RIBOSOMAL SUBUNIT PROTEIN UL1M"/>
    <property type="match status" value="1"/>
</dbReference>
<dbReference type="Pfam" id="PF00687">
    <property type="entry name" value="Ribosomal_L1"/>
    <property type="match status" value="1"/>
</dbReference>
<dbReference type="PIRSF" id="PIRSF002155">
    <property type="entry name" value="Ribosomal_L1"/>
    <property type="match status" value="1"/>
</dbReference>
<dbReference type="SUPFAM" id="SSF56808">
    <property type="entry name" value="Ribosomal protein L1"/>
    <property type="match status" value="1"/>
</dbReference>
<dbReference type="PROSITE" id="PS01199">
    <property type="entry name" value="RIBOSOMAL_L1"/>
    <property type="match status" value="1"/>
</dbReference>
<organism>
    <name type="scientific">Wolinella succinogenes (strain ATCC 29543 / DSM 1740 / CCUG 13145 / JCM 31913 / LMG 7466 / NCTC 11488 / FDC 602W)</name>
    <name type="common">Vibrio succinogenes</name>
    <dbReference type="NCBI Taxonomy" id="273121"/>
    <lineage>
        <taxon>Bacteria</taxon>
        <taxon>Pseudomonadati</taxon>
        <taxon>Campylobacterota</taxon>
        <taxon>Epsilonproteobacteria</taxon>
        <taxon>Campylobacterales</taxon>
        <taxon>Helicobacteraceae</taxon>
        <taxon>Wolinella</taxon>
    </lineage>
</organism>
<feature type="chain" id="PRO_0000125777" description="Large ribosomal subunit protein uL1">
    <location>
        <begin position="1"/>
        <end position="234"/>
    </location>
</feature>
<proteinExistence type="inferred from homology"/>
<comment type="function">
    <text evidence="1">Binds directly to 23S rRNA. The L1 stalk is quite mobile in the ribosome, and is involved in E site tRNA release.</text>
</comment>
<comment type="function">
    <text evidence="1">Protein L1 is also a translational repressor protein, it controls the translation of the L11 operon by binding to its mRNA.</text>
</comment>
<comment type="subunit">
    <text evidence="1">Part of the 50S ribosomal subunit.</text>
</comment>
<comment type="similarity">
    <text evidence="1">Belongs to the universal ribosomal protein uL1 family.</text>
</comment>
<protein>
    <recommendedName>
        <fullName evidence="1">Large ribosomal subunit protein uL1</fullName>
    </recommendedName>
    <alternativeName>
        <fullName evidence="2">50S ribosomal protein L1</fullName>
    </alternativeName>
</protein>
<sequence>MSKKITKRMQALLDKVDTQKVYDITTASVSVKSLASAKFDETVEVALKLGVDPRHADQMIRGAVVLPHGTGKKVRVAVFAKGVKADEAKAAGADVVGDDDLAEEIKNGNINFDIVIATPDMMALVGKVGRILGPKGLMPNPKTGTVTADVTKAVNNVKSGQVNFRVDKKGNIHAPVGKASFDAEKIKENVLELVKMINRLKPATAKGKYIRHAAISLTMSPSLELDAQELMDAR</sequence>
<evidence type="ECO:0000255" key="1">
    <source>
        <dbReference type="HAMAP-Rule" id="MF_01318"/>
    </source>
</evidence>
<evidence type="ECO:0000305" key="2"/>
<reference key="1">
    <citation type="journal article" date="2003" name="Proc. Natl. Acad. Sci. U.S.A.">
        <title>Complete genome sequence and analysis of Wolinella succinogenes.</title>
        <authorList>
            <person name="Baar C."/>
            <person name="Eppinger M."/>
            <person name="Raddatz G."/>
            <person name="Simon J."/>
            <person name="Lanz C."/>
            <person name="Klimmek O."/>
            <person name="Nandakumar R."/>
            <person name="Gross R."/>
            <person name="Rosinus A."/>
            <person name="Keller H."/>
            <person name="Jagtap P."/>
            <person name="Linke B."/>
            <person name="Meyer F."/>
            <person name="Lederer H."/>
            <person name="Schuster S.C."/>
        </authorList>
    </citation>
    <scope>NUCLEOTIDE SEQUENCE [LARGE SCALE GENOMIC DNA]</scope>
    <source>
        <strain>ATCC 29543 / DSM 1740 / CCUG 13145 / JCM 31913 / LMG 7466 / NCTC 11488 / FDC 602W</strain>
    </source>
</reference>
<gene>
    <name evidence="1" type="primary">rplA</name>
    <name type="ordered locus">WS0464</name>
</gene>
<keyword id="KW-1185">Reference proteome</keyword>
<keyword id="KW-0678">Repressor</keyword>
<keyword id="KW-0687">Ribonucleoprotein</keyword>
<keyword id="KW-0689">Ribosomal protein</keyword>
<keyword id="KW-0694">RNA-binding</keyword>
<keyword id="KW-0699">rRNA-binding</keyword>
<keyword id="KW-0810">Translation regulation</keyword>
<keyword id="KW-0820">tRNA-binding</keyword>
<name>RL1_WOLSU</name>